<gene>
    <name type="ORF">SPAC227.05</name>
</gene>
<keyword id="KW-0143">Chaperone</keyword>
<keyword id="KW-1185">Reference proteome</keyword>
<protein>
    <recommendedName>
        <fullName>Probable prefoldin subunit 4</fullName>
    </recommendedName>
</protein>
<sequence length="123" mass="14189">MEQVPVLAEDQRNLNEFSVLHSRKAIQELDIKNLKTQIEDIVDAKNECELLDEDDGDDIPALKVGDAFFQVSLPVLLDQLEQSEESLEKQVDVLRSSMEKDETRIQELKSMLYSKFHDQINLD</sequence>
<name>PFD4_SCHPO</name>
<comment type="function">
    <text evidence="1">Binds specifically to cytosolic chaperonin (c-CPN) and transfers target proteins to it. Binds to nascent polypeptide chain and promotes folding in an environment in which there are many competing pathways for nonnative proteins (By similarity).</text>
</comment>
<comment type="subunit">
    <text evidence="1">Heterohexamer of two PFD-alpha type and four PFD-beta type subunits.</text>
</comment>
<comment type="similarity">
    <text evidence="2">Belongs to the prefoldin subunit beta family.</text>
</comment>
<evidence type="ECO:0000250" key="1"/>
<evidence type="ECO:0000305" key="2"/>
<dbReference type="EMBL" id="CU329670">
    <property type="protein sequence ID" value="CAB61454.1"/>
    <property type="molecule type" value="Genomic_DNA"/>
</dbReference>
<dbReference type="PIR" id="T50161">
    <property type="entry name" value="T50161"/>
</dbReference>
<dbReference type="SMR" id="Q9UTD4"/>
<dbReference type="BioGRID" id="278543">
    <property type="interactions" value="87"/>
</dbReference>
<dbReference type="FunCoup" id="Q9UTD4">
    <property type="interactions" value="382"/>
</dbReference>
<dbReference type="STRING" id="284812.Q9UTD4"/>
<dbReference type="iPTMnet" id="Q9UTD4"/>
<dbReference type="PaxDb" id="4896-SPAC227.05.1"/>
<dbReference type="EnsemblFungi" id="SPAC227.05.1">
    <property type="protein sequence ID" value="SPAC227.05.1:pep"/>
    <property type="gene ID" value="SPAC227.05"/>
</dbReference>
<dbReference type="KEGG" id="spo:2542066"/>
<dbReference type="PomBase" id="SPAC227.05"/>
<dbReference type="VEuPathDB" id="FungiDB:SPAC227.05"/>
<dbReference type="eggNOG" id="KOG1760">
    <property type="taxonomic scope" value="Eukaryota"/>
</dbReference>
<dbReference type="HOGENOM" id="CLU_130032_0_0_1"/>
<dbReference type="InParanoid" id="Q9UTD4"/>
<dbReference type="OMA" id="KFGRAIN"/>
<dbReference type="PhylomeDB" id="Q9UTD4"/>
<dbReference type="PRO" id="PR:Q9UTD4"/>
<dbReference type="Proteomes" id="UP000002485">
    <property type="component" value="Chromosome I"/>
</dbReference>
<dbReference type="GO" id="GO:0005737">
    <property type="term" value="C:cytoplasm"/>
    <property type="evidence" value="ECO:0000318"/>
    <property type="project" value="GO_Central"/>
</dbReference>
<dbReference type="GO" id="GO:0005829">
    <property type="term" value="C:cytosol"/>
    <property type="evidence" value="ECO:0007005"/>
    <property type="project" value="PomBase"/>
</dbReference>
<dbReference type="GO" id="GO:0005634">
    <property type="term" value="C:nucleus"/>
    <property type="evidence" value="ECO:0007005"/>
    <property type="project" value="PomBase"/>
</dbReference>
<dbReference type="GO" id="GO:0016272">
    <property type="term" value="C:prefoldin complex"/>
    <property type="evidence" value="ECO:0000318"/>
    <property type="project" value="GO_Central"/>
</dbReference>
<dbReference type="GO" id="GO:0051082">
    <property type="term" value="F:unfolded protein binding"/>
    <property type="evidence" value="ECO:0000318"/>
    <property type="project" value="GO_Central"/>
</dbReference>
<dbReference type="GO" id="GO:0006457">
    <property type="term" value="P:protein folding"/>
    <property type="evidence" value="ECO:0000318"/>
    <property type="project" value="GO_Central"/>
</dbReference>
<dbReference type="InterPro" id="IPR002777">
    <property type="entry name" value="PFD_beta-like"/>
</dbReference>
<dbReference type="InterPro" id="IPR016661">
    <property type="entry name" value="PFDN4"/>
</dbReference>
<dbReference type="PANTHER" id="PTHR21100">
    <property type="entry name" value="PREFOLDIN SUBUNIT 4"/>
    <property type="match status" value="1"/>
</dbReference>
<dbReference type="PANTHER" id="PTHR21100:SF9">
    <property type="entry name" value="PREFOLDIN SUBUNIT 4"/>
    <property type="match status" value="1"/>
</dbReference>
<dbReference type="Pfam" id="PF01920">
    <property type="entry name" value="Prefoldin_2"/>
    <property type="match status" value="1"/>
</dbReference>
<dbReference type="PIRSF" id="PIRSF016477">
    <property type="entry name" value="Prefoldin_subunit_4"/>
    <property type="match status" value="1"/>
</dbReference>
<dbReference type="SUPFAM" id="SSF46579">
    <property type="entry name" value="Prefoldin"/>
    <property type="match status" value="1"/>
</dbReference>
<proteinExistence type="inferred from homology"/>
<organism>
    <name type="scientific">Schizosaccharomyces pombe (strain 972 / ATCC 24843)</name>
    <name type="common">Fission yeast</name>
    <dbReference type="NCBI Taxonomy" id="284812"/>
    <lineage>
        <taxon>Eukaryota</taxon>
        <taxon>Fungi</taxon>
        <taxon>Dikarya</taxon>
        <taxon>Ascomycota</taxon>
        <taxon>Taphrinomycotina</taxon>
        <taxon>Schizosaccharomycetes</taxon>
        <taxon>Schizosaccharomycetales</taxon>
        <taxon>Schizosaccharomycetaceae</taxon>
        <taxon>Schizosaccharomyces</taxon>
    </lineage>
</organism>
<feature type="chain" id="PRO_0000124847" description="Probable prefoldin subunit 4">
    <location>
        <begin position="1"/>
        <end position="123"/>
    </location>
</feature>
<reference key="1">
    <citation type="journal article" date="2002" name="Nature">
        <title>The genome sequence of Schizosaccharomyces pombe.</title>
        <authorList>
            <person name="Wood V."/>
            <person name="Gwilliam R."/>
            <person name="Rajandream M.A."/>
            <person name="Lyne M.H."/>
            <person name="Lyne R."/>
            <person name="Stewart A."/>
            <person name="Sgouros J.G."/>
            <person name="Peat N."/>
            <person name="Hayles J."/>
            <person name="Baker S.G."/>
            <person name="Basham D."/>
            <person name="Bowman S."/>
            <person name="Brooks K."/>
            <person name="Brown D."/>
            <person name="Brown S."/>
            <person name="Chillingworth T."/>
            <person name="Churcher C.M."/>
            <person name="Collins M."/>
            <person name="Connor R."/>
            <person name="Cronin A."/>
            <person name="Davis P."/>
            <person name="Feltwell T."/>
            <person name="Fraser A."/>
            <person name="Gentles S."/>
            <person name="Goble A."/>
            <person name="Hamlin N."/>
            <person name="Harris D.E."/>
            <person name="Hidalgo J."/>
            <person name="Hodgson G."/>
            <person name="Holroyd S."/>
            <person name="Hornsby T."/>
            <person name="Howarth S."/>
            <person name="Huckle E.J."/>
            <person name="Hunt S."/>
            <person name="Jagels K."/>
            <person name="James K.D."/>
            <person name="Jones L."/>
            <person name="Jones M."/>
            <person name="Leather S."/>
            <person name="McDonald S."/>
            <person name="McLean J."/>
            <person name="Mooney P."/>
            <person name="Moule S."/>
            <person name="Mungall K.L."/>
            <person name="Murphy L.D."/>
            <person name="Niblett D."/>
            <person name="Odell C."/>
            <person name="Oliver K."/>
            <person name="O'Neil S."/>
            <person name="Pearson D."/>
            <person name="Quail M.A."/>
            <person name="Rabbinowitsch E."/>
            <person name="Rutherford K.M."/>
            <person name="Rutter S."/>
            <person name="Saunders D."/>
            <person name="Seeger K."/>
            <person name="Sharp S."/>
            <person name="Skelton J."/>
            <person name="Simmonds M.N."/>
            <person name="Squares R."/>
            <person name="Squares S."/>
            <person name="Stevens K."/>
            <person name="Taylor K."/>
            <person name="Taylor R.G."/>
            <person name="Tivey A."/>
            <person name="Walsh S.V."/>
            <person name="Warren T."/>
            <person name="Whitehead S."/>
            <person name="Woodward J.R."/>
            <person name="Volckaert G."/>
            <person name="Aert R."/>
            <person name="Robben J."/>
            <person name="Grymonprez B."/>
            <person name="Weltjens I."/>
            <person name="Vanstreels E."/>
            <person name="Rieger M."/>
            <person name="Schaefer M."/>
            <person name="Mueller-Auer S."/>
            <person name="Gabel C."/>
            <person name="Fuchs M."/>
            <person name="Duesterhoeft A."/>
            <person name="Fritzc C."/>
            <person name="Holzer E."/>
            <person name="Moestl D."/>
            <person name="Hilbert H."/>
            <person name="Borzym K."/>
            <person name="Langer I."/>
            <person name="Beck A."/>
            <person name="Lehrach H."/>
            <person name="Reinhardt R."/>
            <person name="Pohl T.M."/>
            <person name="Eger P."/>
            <person name="Zimmermann W."/>
            <person name="Wedler H."/>
            <person name="Wambutt R."/>
            <person name="Purnelle B."/>
            <person name="Goffeau A."/>
            <person name="Cadieu E."/>
            <person name="Dreano S."/>
            <person name="Gloux S."/>
            <person name="Lelaure V."/>
            <person name="Mottier S."/>
            <person name="Galibert F."/>
            <person name="Aves S.J."/>
            <person name="Xiang Z."/>
            <person name="Hunt C."/>
            <person name="Moore K."/>
            <person name="Hurst S.M."/>
            <person name="Lucas M."/>
            <person name="Rochet M."/>
            <person name="Gaillardin C."/>
            <person name="Tallada V.A."/>
            <person name="Garzon A."/>
            <person name="Thode G."/>
            <person name="Daga R.R."/>
            <person name="Cruzado L."/>
            <person name="Jimenez J."/>
            <person name="Sanchez M."/>
            <person name="del Rey F."/>
            <person name="Benito J."/>
            <person name="Dominguez A."/>
            <person name="Revuelta J.L."/>
            <person name="Moreno S."/>
            <person name="Armstrong J."/>
            <person name="Forsburg S.L."/>
            <person name="Cerutti L."/>
            <person name="Lowe T."/>
            <person name="McCombie W.R."/>
            <person name="Paulsen I."/>
            <person name="Potashkin J."/>
            <person name="Shpakovski G.V."/>
            <person name="Ussery D."/>
            <person name="Barrell B.G."/>
            <person name="Nurse P."/>
        </authorList>
    </citation>
    <scope>NUCLEOTIDE SEQUENCE [LARGE SCALE GENOMIC DNA]</scope>
    <source>
        <strain>972 / ATCC 24843</strain>
    </source>
</reference>
<accession>Q9UTD4</accession>